<comment type="subcellular location">
    <subcellularLocation>
        <location evidence="3">Membrane</location>
        <topology evidence="3">Single-pass membrane protein</topology>
    </subcellularLocation>
</comment>
<evidence type="ECO:0000255" key="1"/>
<evidence type="ECO:0000256" key="2">
    <source>
        <dbReference type="SAM" id="MobiDB-lite"/>
    </source>
</evidence>
<evidence type="ECO:0000305" key="3"/>
<reference key="1">
    <citation type="submission" date="2005-06" db="EMBL/GenBank/DDBJ databases">
        <title>DNA sequences of macaque genes expressed in brain or testis and its evolutionary implications.</title>
        <authorList>
            <consortium name="International consortium for macaque cDNA sequencing and analysis"/>
        </authorList>
    </citation>
    <scope>NUCLEOTIDE SEQUENCE [LARGE SCALE MRNA]</scope>
    <source>
        <tissue>Testis</tissue>
    </source>
</reference>
<sequence length="244" mass="28029">MGDLFSLFWEVDPPPIPLNCAIPNQDYECRKDDSCGTIGNFLLWYFVIVFVLMFFSRASVWMSEDKKDEGSGTSTSVRKASKETSYKWQSKDGAWDPSQTMKKPKQNQLTPVTNSEVALVNAYLEQRRARRQSQFNEVNQNQHDSDTTECGSEESNSEASSWKESESEHHPSPDSIKRRKMAQRQRNLGSYQMSERHCLHCKAMRTNEWLVHHSQQKASVTPPMKGDSPEESSISDINTKFSKF</sequence>
<organism>
    <name type="scientific">Macaca fascicularis</name>
    <name type="common">Crab-eating macaque</name>
    <name type="synonym">Cynomolgus monkey</name>
    <dbReference type="NCBI Taxonomy" id="9541"/>
    <lineage>
        <taxon>Eukaryota</taxon>
        <taxon>Metazoa</taxon>
        <taxon>Chordata</taxon>
        <taxon>Craniata</taxon>
        <taxon>Vertebrata</taxon>
        <taxon>Euteleostomi</taxon>
        <taxon>Mammalia</taxon>
        <taxon>Eutheria</taxon>
        <taxon>Euarchontoglires</taxon>
        <taxon>Primates</taxon>
        <taxon>Haplorrhini</taxon>
        <taxon>Catarrhini</taxon>
        <taxon>Cercopithecidae</taxon>
        <taxon>Cercopithecinae</taxon>
        <taxon>Macaca</taxon>
    </lineage>
</organism>
<protein>
    <recommendedName>
        <fullName>Serine-rich single-pass membrane protein 1</fullName>
    </recommendedName>
</protein>
<proteinExistence type="evidence at transcript level"/>
<accession>Q4R309</accession>
<feature type="chain" id="PRO_0000271355" description="Serine-rich single-pass membrane protein 1">
    <location>
        <begin position="1"/>
        <end position="244"/>
    </location>
</feature>
<feature type="transmembrane region" description="Helical" evidence="1">
    <location>
        <begin position="35"/>
        <end position="55"/>
    </location>
</feature>
<feature type="region of interest" description="Disordered" evidence="2">
    <location>
        <begin position="65"/>
        <end position="112"/>
    </location>
</feature>
<feature type="region of interest" description="Disordered" evidence="2">
    <location>
        <begin position="132"/>
        <end position="191"/>
    </location>
</feature>
<feature type="region of interest" description="Disordered" evidence="2">
    <location>
        <begin position="213"/>
        <end position="244"/>
    </location>
</feature>
<feature type="compositionally biased region" description="Basic and acidic residues" evidence="2">
    <location>
        <begin position="80"/>
        <end position="94"/>
    </location>
</feature>
<feature type="compositionally biased region" description="Polar residues" evidence="2">
    <location>
        <begin position="97"/>
        <end position="112"/>
    </location>
</feature>
<feature type="compositionally biased region" description="Polar residues" evidence="2">
    <location>
        <begin position="132"/>
        <end position="142"/>
    </location>
</feature>
<feature type="compositionally biased region" description="Basic and acidic residues" evidence="2">
    <location>
        <begin position="161"/>
        <end position="176"/>
    </location>
</feature>
<feature type="compositionally biased region" description="Polar residues" evidence="2">
    <location>
        <begin position="231"/>
        <end position="244"/>
    </location>
</feature>
<gene>
    <name type="primary">SSMEM1</name>
    <name type="ORF">QtsA-20413</name>
</gene>
<keyword id="KW-0472">Membrane</keyword>
<keyword id="KW-1185">Reference proteome</keyword>
<keyword id="KW-0812">Transmembrane</keyword>
<keyword id="KW-1133">Transmembrane helix</keyword>
<name>SSMM1_MACFA</name>
<dbReference type="EMBL" id="AB179459">
    <property type="protein sequence ID" value="BAE02510.1"/>
    <property type="molecule type" value="mRNA"/>
</dbReference>
<dbReference type="RefSeq" id="NP_001270113.1">
    <property type="nucleotide sequence ID" value="NM_001283184.1"/>
</dbReference>
<dbReference type="RefSeq" id="XP_045244293.1">
    <property type="nucleotide sequence ID" value="XM_045388358.2"/>
</dbReference>
<dbReference type="STRING" id="9541.ENSMFAP00000017250"/>
<dbReference type="Ensembl" id="ENSMFAT00000067790.2">
    <property type="protein sequence ID" value="ENSMFAP00000017250.1"/>
    <property type="gene ID" value="ENSMFAG00000031766.2"/>
</dbReference>
<dbReference type="GeneID" id="102129936"/>
<dbReference type="VEuPathDB" id="HostDB:ENSMFAG00000031766"/>
<dbReference type="eggNOG" id="ENOG502S512">
    <property type="taxonomic scope" value="Eukaryota"/>
</dbReference>
<dbReference type="GeneTree" id="ENSGT00390000015907"/>
<dbReference type="OMA" id="CQKDDSC"/>
<dbReference type="Proteomes" id="UP000233100">
    <property type="component" value="Chromosome 3"/>
</dbReference>
<dbReference type="Bgee" id="ENSMFAG00000031766">
    <property type="expression patterns" value="Expressed in multicellular organism"/>
</dbReference>
<dbReference type="GO" id="GO:0016020">
    <property type="term" value="C:membrane"/>
    <property type="evidence" value="ECO:0007669"/>
    <property type="project" value="UniProtKB-SubCell"/>
</dbReference>
<dbReference type="InterPro" id="IPR027955">
    <property type="entry name" value="DUF4636"/>
</dbReference>
<dbReference type="PANTHER" id="PTHR31822">
    <property type="entry name" value="SERINE-RICH SINGLE-PASS MEMBRANE PROTEIN 1"/>
    <property type="match status" value="1"/>
</dbReference>
<dbReference type="PANTHER" id="PTHR31822:SF1">
    <property type="entry name" value="SERINE-RICH SINGLE-PASS MEMBRANE PROTEIN 1"/>
    <property type="match status" value="1"/>
</dbReference>
<dbReference type="Pfam" id="PF15468">
    <property type="entry name" value="DUF4636"/>
    <property type="match status" value="1"/>
</dbReference>